<accession>Q54RQ8</accession>
<accession>Q8IHL2</accession>
<name>LVSE_DICDI</name>
<dbReference type="EMBL" id="AY159036">
    <property type="protein sequence ID" value="AAN38983.1"/>
    <property type="molecule type" value="Genomic_DNA"/>
</dbReference>
<dbReference type="EMBL" id="AAFI02000049">
    <property type="protein sequence ID" value="EAL65906.1"/>
    <property type="molecule type" value="Genomic_DNA"/>
</dbReference>
<dbReference type="RefSeq" id="XP_639293.1">
    <property type="nucleotide sequence ID" value="XM_634201.1"/>
</dbReference>
<dbReference type="SMR" id="Q54RQ8"/>
<dbReference type="FunCoup" id="Q54RQ8">
    <property type="interactions" value="2"/>
</dbReference>
<dbReference type="STRING" id="44689.Q54RQ8"/>
<dbReference type="GlyGen" id="Q54RQ8">
    <property type="glycosylation" value="1 site"/>
</dbReference>
<dbReference type="PaxDb" id="44689-DDB0191473"/>
<dbReference type="EnsemblProtists" id="EAL65906">
    <property type="protein sequence ID" value="EAL65906"/>
    <property type="gene ID" value="DDB_G0282925"/>
</dbReference>
<dbReference type="GeneID" id="8623864"/>
<dbReference type="KEGG" id="ddi:DDB_G0282925"/>
<dbReference type="dictyBase" id="DDB_G0282925">
    <property type="gene designation" value="lvsE"/>
</dbReference>
<dbReference type="VEuPathDB" id="AmoebaDB:DDB_G0282925"/>
<dbReference type="eggNOG" id="KOG1787">
    <property type="taxonomic scope" value="Eukaryota"/>
</dbReference>
<dbReference type="eggNOG" id="KOG3388">
    <property type="taxonomic scope" value="Eukaryota"/>
</dbReference>
<dbReference type="HOGENOM" id="CLU_231322_0_0_1"/>
<dbReference type="InParanoid" id="Q54RQ8"/>
<dbReference type="OMA" id="TRCHIGN"/>
<dbReference type="PRO" id="PR:Q54RQ8"/>
<dbReference type="Proteomes" id="UP000002195">
    <property type="component" value="Chromosome 4"/>
</dbReference>
<dbReference type="GO" id="GO:0005829">
    <property type="term" value="C:cytosol"/>
    <property type="evidence" value="ECO:0000318"/>
    <property type="project" value="GO_Central"/>
</dbReference>
<dbReference type="GO" id="GO:0016020">
    <property type="term" value="C:membrane"/>
    <property type="evidence" value="ECO:0000318"/>
    <property type="project" value="GO_Central"/>
</dbReference>
<dbReference type="GO" id="GO:0019901">
    <property type="term" value="F:protein kinase binding"/>
    <property type="evidence" value="ECO:0000318"/>
    <property type="project" value="GO_Central"/>
</dbReference>
<dbReference type="GO" id="GO:0043327">
    <property type="term" value="P:chemotaxis to cAMP"/>
    <property type="evidence" value="ECO:0007001"/>
    <property type="project" value="dictyBase"/>
</dbReference>
<dbReference type="GO" id="GO:0008104">
    <property type="term" value="P:protein localization"/>
    <property type="evidence" value="ECO:0000318"/>
    <property type="project" value="GO_Central"/>
</dbReference>
<dbReference type="CDD" id="cd06071">
    <property type="entry name" value="Beach"/>
    <property type="match status" value="1"/>
</dbReference>
<dbReference type="CDD" id="cd01201">
    <property type="entry name" value="PH_BEACH"/>
    <property type="match status" value="1"/>
</dbReference>
<dbReference type="CDD" id="cd16395">
    <property type="entry name" value="Srx"/>
    <property type="match status" value="1"/>
</dbReference>
<dbReference type="FunFam" id="2.60.120.200:FF:000452">
    <property type="entry name" value="BEACH domain-containing protein lvsE"/>
    <property type="match status" value="1"/>
</dbReference>
<dbReference type="Gene3D" id="2.60.120.200">
    <property type="match status" value="1"/>
</dbReference>
<dbReference type="Gene3D" id="1.10.1540.10">
    <property type="entry name" value="BEACH domain"/>
    <property type="match status" value="1"/>
</dbReference>
<dbReference type="Gene3D" id="3.90.1530.10">
    <property type="entry name" value="Conserved hypothetical protein from pyrococcus furiosus pfu- 392566-001, ParB domain"/>
    <property type="match status" value="1"/>
</dbReference>
<dbReference type="Gene3D" id="2.30.29.30">
    <property type="entry name" value="Pleckstrin-homology domain (PH domain)/Phosphotyrosine-binding domain (PTB)"/>
    <property type="match status" value="1"/>
</dbReference>
<dbReference type="Gene3D" id="2.130.10.10">
    <property type="entry name" value="YVTN repeat-like/Quinoprotein amine dehydrogenase"/>
    <property type="match status" value="1"/>
</dbReference>
<dbReference type="InterPro" id="IPR000409">
    <property type="entry name" value="BEACH_dom"/>
</dbReference>
<dbReference type="InterPro" id="IPR036372">
    <property type="entry name" value="BEACH_dom_sf"/>
</dbReference>
<dbReference type="InterPro" id="IPR050865">
    <property type="entry name" value="BEACH_Domain"/>
</dbReference>
<dbReference type="InterPro" id="IPR013320">
    <property type="entry name" value="ConA-like_dom_sf"/>
</dbReference>
<dbReference type="InterPro" id="IPR046851">
    <property type="entry name" value="NBCH_WD40"/>
</dbReference>
<dbReference type="InterPro" id="IPR031570">
    <property type="entry name" value="NBEA/BDCP_DUF4704"/>
</dbReference>
<dbReference type="InterPro" id="IPR003115">
    <property type="entry name" value="ParB/Sulfiredoxin_dom"/>
</dbReference>
<dbReference type="InterPro" id="IPR036086">
    <property type="entry name" value="ParB/Sulfiredoxin_sf"/>
</dbReference>
<dbReference type="InterPro" id="IPR023362">
    <property type="entry name" value="PH-BEACH_dom"/>
</dbReference>
<dbReference type="InterPro" id="IPR011993">
    <property type="entry name" value="PH-like_dom_sf"/>
</dbReference>
<dbReference type="InterPro" id="IPR015943">
    <property type="entry name" value="WD40/YVTN_repeat-like_dom_sf"/>
</dbReference>
<dbReference type="InterPro" id="IPR036322">
    <property type="entry name" value="WD40_repeat_dom_sf"/>
</dbReference>
<dbReference type="InterPro" id="IPR001680">
    <property type="entry name" value="WD40_rpt"/>
</dbReference>
<dbReference type="PANTHER" id="PTHR13743:SF108">
    <property type="entry name" value="BEACH DOMAIN-CONTAINING PROTEIN LVSE"/>
    <property type="match status" value="1"/>
</dbReference>
<dbReference type="PANTHER" id="PTHR13743">
    <property type="entry name" value="BEIGE/BEACH-RELATED"/>
    <property type="match status" value="1"/>
</dbReference>
<dbReference type="Pfam" id="PF02138">
    <property type="entry name" value="Beach"/>
    <property type="match status" value="1"/>
</dbReference>
<dbReference type="Pfam" id="PF15787">
    <property type="entry name" value="DUF4704"/>
    <property type="match status" value="1"/>
</dbReference>
<dbReference type="Pfam" id="PF13385">
    <property type="entry name" value="Laminin_G_3"/>
    <property type="match status" value="1"/>
</dbReference>
<dbReference type="Pfam" id="PF20426">
    <property type="entry name" value="NBCH_WD40"/>
    <property type="match status" value="1"/>
</dbReference>
<dbReference type="Pfam" id="PF02195">
    <property type="entry name" value="ParBc"/>
    <property type="match status" value="1"/>
</dbReference>
<dbReference type="Pfam" id="PF14844">
    <property type="entry name" value="PH_BEACH"/>
    <property type="match status" value="1"/>
</dbReference>
<dbReference type="SMART" id="SM01026">
    <property type="entry name" value="Beach"/>
    <property type="match status" value="1"/>
</dbReference>
<dbReference type="SMART" id="SM00470">
    <property type="entry name" value="ParB"/>
    <property type="match status" value="1"/>
</dbReference>
<dbReference type="SMART" id="SM00320">
    <property type="entry name" value="WD40"/>
    <property type="match status" value="2"/>
</dbReference>
<dbReference type="SUPFAM" id="SSF81837">
    <property type="entry name" value="BEACH domain"/>
    <property type="match status" value="1"/>
</dbReference>
<dbReference type="SUPFAM" id="SSF49899">
    <property type="entry name" value="Concanavalin A-like lectins/glucanases"/>
    <property type="match status" value="1"/>
</dbReference>
<dbReference type="SUPFAM" id="SSF110849">
    <property type="entry name" value="ParB/Sulfiredoxin"/>
    <property type="match status" value="1"/>
</dbReference>
<dbReference type="SUPFAM" id="SSF50729">
    <property type="entry name" value="PH domain-like"/>
    <property type="match status" value="1"/>
</dbReference>
<dbReference type="SUPFAM" id="SSF50978">
    <property type="entry name" value="WD40 repeat-like"/>
    <property type="match status" value="1"/>
</dbReference>
<dbReference type="PROSITE" id="PS50197">
    <property type="entry name" value="BEACH"/>
    <property type="match status" value="1"/>
</dbReference>
<dbReference type="PROSITE" id="PS51783">
    <property type="entry name" value="PH_BEACH"/>
    <property type="match status" value="1"/>
</dbReference>
<dbReference type="PROSITE" id="PS50082">
    <property type="entry name" value="WD_REPEATS_2"/>
    <property type="match status" value="1"/>
</dbReference>
<dbReference type="PROSITE" id="PS50294">
    <property type="entry name" value="WD_REPEATS_REGION"/>
    <property type="match status" value="1"/>
</dbReference>
<keyword id="KW-1185">Reference proteome</keyword>
<keyword id="KW-0677">Repeat</keyword>
<keyword id="KW-0853">WD repeat</keyword>
<sequence>MSVYTQLISVTEMPMSVIHRPLPSELDEEKVLSLMETIKSGVEIPPIDVNWVKGKDENNNYYFSFGGCHRYEATKRLNLKTIRARIIKSTPSDIKVSPRLAQLPSDQSNYNMERLYVQDIFSKIKNKNQPDLSDLIILFDRLTSLAYQDVHSSKKVKFDYFYMFFNIMLDSPILSVTESTGNRVLHLLLLKKLNGLLFSNVLIQNYCHNEKWVYKLLNYLISRSKHDSDVIGELSITLQIICSFNITTKELKYFFKLLESINEERPYYWNVLIEILQFLFRKRVGPDIYFNFSNSNGGLMVPDKQPFDGGYSISFWMNTDDFTSLKYRPGLFSFFSDENVGFEVTFQQQSLIFQIRTKSKSPCIGSHYRFQPGKWYHVIISHEYFLLRKSQLSLYVNGKLEEKMPLLYPKSDRPFTRCHIGNSVSLQNGFLGRIGSILMIKDALEPAEATLLYQIDKNSTMLQEKVPKEGMTAIYDSQLFLASGRRNIPIIFTYHPRATDKALCFEISSGELPNAATIMDGVSILKSVSPLDQLVYIGGLKMIYPLFAQLGQPINGVEIEMPQDISDHMTTSPLPLSNLNDFISIPSSSGPTPIFPSSIGSGHSSCLFKILLSLLQHHPAFREQIIETHGFQVISFLLKSTPTSSPYWTPDDIDSLSRLISFCAGKQPLWSLAIQNLIMNNFQLWSQTNSLTQIALFETIHQRIQTNPQFWRNLVRVDQWLTILRKFYQLPSASSLSPLSLSSNSSSLSASLSPIINSGSWCKESIEKPIFKDLPTIEKIKKARVQIIVIIRETAQPRLSPSETRWLSLYLKESTIENHDDVIRMLEDIIQPLQSKDTWWDDVMASANLQDENLVLKSRKDFQSTQTKLPSHISYLWDIDCCEEVVKRLEEIKYQDRSNLILFKHWVHIRRVRAGNLNGIKTRLTNGNQTNTPILTKLKQMGIIQSPSTSLSTSSITPPPPNSRNTSTGILKNSSIKEKQLFQSNIDSLSFSLKETTTTTTTTTTTTTTSTTSNTGNDSPLSIESPISSPVLIENTTNTTNTTTTNTTNSSMLSIKDYDDGDEPEDTTVVHWKLDRTEGPLRMRRKLKRNYFGSDYKGLSKQNRFGRSRRTTLEKYSNEIETFYIDQDCGDGLGNIIITIVNEPPLPHQTTSYKEIEFFNESQSQSSSSSNIDNLNPNTGLPYNKSTNNLSNVNNVNNNNNNNSNNINVSGNNTIGPSSSKSPLRNSRSMSIGSSATKSPSRQNVKDVFNLDNNNSNSNNNNSNNNNNNNNNNNNNNNNNNNNNNNNNNNNNNNNNNFNNNLSPTLNSILPNLNNISINSGSNTIGPNSSMSSILSPRIGEFDENGVDVSSPNSSSLSSSSSNNQIEEEKFIGSWRCQMVVPVGVIPGQFTITSHYLTFDKDIQIVDQRTGRTFSPSLNGIQQQQQQQQDQDFGSVKIKNTYIWKVKDLVEIHRVRYLLRWNSIEIFLNHKSYMINFSKEQESIQIFNKIVALHPPNLRVKWSDHPSKIIKKSKLTMKWKNREISNFEYLMSLNTIAGRTYNDISQYPVFPQIISDYKSEFLDLNDSRSFRDLSKPMGALNQQRLDTLIKRYQSMQSAQDPTMPPFLYGSHYSNFGIVAYYQVRLEPFTSFHLSLQSGVFDHPQRMFESMDKMWDGVSGNNLADVKELIPEFFYMPEFINNGEGFNFGFTNSKSGDLILPNWAHQSPELFIQINREALESEYVSMNLHHWIDLIFGFKQNGPAAQEANNVFFHLTYENNAALQRDDPDERQSIASQIKEFGQTPPQLFSKPHPIRKTLQEISKPQKDLFARIAQNLFSPSNNGTINSSFSSTSTSTSTSSPPPSTLNSPQGPSLQYPFKVLKTKSSLPLVHISSCQDSDIVVLVYRDGVMAVNQFVPSPNGNLPFTFDIDKTLSTYKEKQIDTLFMSDSVTCISNCFAITPDGKFMFSCATWDSVFKCSNIQNGRVHRLYRDFHHDMVTCISLGSNGKHFATASSDTTILVWNDVDHLIKDSKAKPSYRLCSHDEPVHCLDINEEWDLIASGSMDKKLILHSLGKGHYQRSMIHNGAVEIVKISTVGQTIISYCSMSFLYVHSFNGKLLKIQQSDEKIYDAKLTGESVKKGGVLGVGSSTQYLVTGGTRGVKVRSLPDLNIVHAFDSPAAIKTIELVAHEKYMLIGLNDGNLVIIPFDVKDL</sequence>
<reference key="1">
    <citation type="journal article" date="2002" name="J. Cell. Biochem.">
        <title>BEACH family of proteins: phylogenetic and functional analysis of six Dictyostelium BEACH proteins.</title>
        <authorList>
            <person name="Wang N."/>
            <person name="Wu W.I."/>
            <person name="De Lozanne A."/>
        </authorList>
    </citation>
    <scope>NUCLEOTIDE SEQUENCE [GENOMIC DNA]</scope>
    <source>
        <strain>NC4A2</strain>
    </source>
</reference>
<reference key="2">
    <citation type="journal article" date="2005" name="Nature">
        <title>The genome of the social amoeba Dictyostelium discoideum.</title>
        <authorList>
            <person name="Eichinger L."/>
            <person name="Pachebat J.A."/>
            <person name="Gloeckner G."/>
            <person name="Rajandream M.A."/>
            <person name="Sucgang R."/>
            <person name="Berriman M."/>
            <person name="Song J."/>
            <person name="Olsen R."/>
            <person name="Szafranski K."/>
            <person name="Xu Q."/>
            <person name="Tunggal B."/>
            <person name="Kummerfeld S."/>
            <person name="Madera M."/>
            <person name="Konfortov B.A."/>
            <person name="Rivero F."/>
            <person name="Bankier A.T."/>
            <person name="Lehmann R."/>
            <person name="Hamlin N."/>
            <person name="Davies R."/>
            <person name="Gaudet P."/>
            <person name="Fey P."/>
            <person name="Pilcher K."/>
            <person name="Chen G."/>
            <person name="Saunders D."/>
            <person name="Sodergren E.J."/>
            <person name="Davis P."/>
            <person name="Kerhornou A."/>
            <person name="Nie X."/>
            <person name="Hall N."/>
            <person name="Anjard C."/>
            <person name="Hemphill L."/>
            <person name="Bason N."/>
            <person name="Farbrother P."/>
            <person name="Desany B."/>
            <person name="Just E."/>
            <person name="Morio T."/>
            <person name="Rost R."/>
            <person name="Churcher C.M."/>
            <person name="Cooper J."/>
            <person name="Haydock S."/>
            <person name="van Driessche N."/>
            <person name="Cronin A."/>
            <person name="Goodhead I."/>
            <person name="Muzny D.M."/>
            <person name="Mourier T."/>
            <person name="Pain A."/>
            <person name="Lu M."/>
            <person name="Harper D."/>
            <person name="Lindsay R."/>
            <person name="Hauser H."/>
            <person name="James K.D."/>
            <person name="Quiles M."/>
            <person name="Madan Babu M."/>
            <person name="Saito T."/>
            <person name="Buchrieser C."/>
            <person name="Wardroper A."/>
            <person name="Felder M."/>
            <person name="Thangavelu M."/>
            <person name="Johnson D."/>
            <person name="Knights A."/>
            <person name="Loulseged H."/>
            <person name="Mungall K.L."/>
            <person name="Oliver K."/>
            <person name="Price C."/>
            <person name="Quail M.A."/>
            <person name="Urushihara H."/>
            <person name="Hernandez J."/>
            <person name="Rabbinowitsch E."/>
            <person name="Steffen D."/>
            <person name="Sanders M."/>
            <person name="Ma J."/>
            <person name="Kohara Y."/>
            <person name="Sharp S."/>
            <person name="Simmonds M.N."/>
            <person name="Spiegler S."/>
            <person name="Tivey A."/>
            <person name="Sugano S."/>
            <person name="White B."/>
            <person name="Walker D."/>
            <person name="Woodward J.R."/>
            <person name="Winckler T."/>
            <person name="Tanaka Y."/>
            <person name="Shaulsky G."/>
            <person name="Schleicher M."/>
            <person name="Weinstock G.M."/>
            <person name="Rosenthal A."/>
            <person name="Cox E.C."/>
            <person name="Chisholm R.L."/>
            <person name="Gibbs R.A."/>
            <person name="Loomis W.F."/>
            <person name="Platzer M."/>
            <person name="Kay R.R."/>
            <person name="Williams J.G."/>
            <person name="Dear P.H."/>
            <person name="Noegel A.A."/>
            <person name="Barrell B.G."/>
            <person name="Kuspa A."/>
        </authorList>
    </citation>
    <scope>NUCLEOTIDE SEQUENCE [LARGE SCALE GENOMIC DNA]</scope>
    <source>
        <strain>AX4</strain>
    </source>
</reference>
<feature type="chain" id="PRO_0000327711" description="BEACH domain-containing protein lvsE">
    <location>
        <begin position="1"/>
        <end position="2192"/>
    </location>
</feature>
<feature type="domain" description="BEACH-type PH" evidence="2">
    <location>
        <begin position="1366"/>
        <end position="1491"/>
    </location>
</feature>
<feature type="domain" description="BEACH" evidence="1">
    <location>
        <begin position="1504"/>
        <end position="1795"/>
    </location>
</feature>
<feature type="repeat" description="WD 1">
    <location>
        <begin position="1973"/>
        <end position="2012"/>
    </location>
</feature>
<feature type="repeat" description="WD 2">
    <location>
        <begin position="2022"/>
        <end position="2061"/>
    </location>
</feature>
<feature type="repeat" description="WD 3">
    <location>
        <begin position="2156"/>
        <end position="2192"/>
    </location>
</feature>
<feature type="region of interest" description="Disordered" evidence="3">
    <location>
        <begin position="948"/>
        <end position="969"/>
    </location>
</feature>
<feature type="region of interest" description="Disordered" evidence="3">
    <location>
        <begin position="996"/>
        <end position="1065"/>
    </location>
</feature>
<feature type="region of interest" description="Disordered" evidence="3">
    <location>
        <begin position="1160"/>
        <end position="1303"/>
    </location>
</feature>
<feature type="region of interest" description="Disordered" evidence="3">
    <location>
        <begin position="1343"/>
        <end position="1363"/>
    </location>
</feature>
<feature type="region of interest" description="Disordered" evidence="3">
    <location>
        <begin position="1823"/>
        <end position="1851"/>
    </location>
</feature>
<feature type="compositionally biased region" description="Low complexity" evidence="3">
    <location>
        <begin position="996"/>
        <end position="1049"/>
    </location>
</feature>
<feature type="compositionally biased region" description="Polar residues" evidence="3">
    <location>
        <begin position="1171"/>
        <end position="1187"/>
    </location>
</feature>
<feature type="compositionally biased region" description="Low complexity" evidence="3">
    <location>
        <begin position="1188"/>
        <end position="1231"/>
    </location>
</feature>
<feature type="compositionally biased region" description="Polar residues" evidence="3">
    <location>
        <begin position="1232"/>
        <end position="1243"/>
    </location>
</feature>
<feature type="compositionally biased region" description="Low complexity" evidence="3">
    <location>
        <begin position="1253"/>
        <end position="1303"/>
    </location>
</feature>
<feature type="compositionally biased region" description="Low complexity" evidence="3">
    <location>
        <begin position="1350"/>
        <end position="1363"/>
    </location>
</feature>
<feature type="compositionally biased region" description="Low complexity" evidence="3">
    <location>
        <begin position="1823"/>
        <end position="1849"/>
    </location>
</feature>
<feature type="sequence conflict" description="In Ref. 1; AAN38983." evidence="4" ref="1">
    <original>N</original>
    <variation>NNN</variation>
    <location>
        <position position="1297"/>
    </location>
</feature>
<protein>
    <recommendedName>
        <fullName>BEACH domain-containing protein lvsE</fullName>
    </recommendedName>
</protein>
<evidence type="ECO:0000255" key="1">
    <source>
        <dbReference type="PROSITE-ProRule" id="PRU00026"/>
    </source>
</evidence>
<evidence type="ECO:0000255" key="2">
    <source>
        <dbReference type="PROSITE-ProRule" id="PRU01119"/>
    </source>
</evidence>
<evidence type="ECO:0000256" key="3">
    <source>
        <dbReference type="SAM" id="MobiDB-lite"/>
    </source>
</evidence>
<evidence type="ECO:0000305" key="4"/>
<proteinExistence type="predicted"/>
<organism>
    <name type="scientific">Dictyostelium discoideum</name>
    <name type="common">Social amoeba</name>
    <dbReference type="NCBI Taxonomy" id="44689"/>
    <lineage>
        <taxon>Eukaryota</taxon>
        <taxon>Amoebozoa</taxon>
        <taxon>Evosea</taxon>
        <taxon>Eumycetozoa</taxon>
        <taxon>Dictyostelia</taxon>
        <taxon>Dictyosteliales</taxon>
        <taxon>Dictyosteliaceae</taxon>
        <taxon>Dictyostelium</taxon>
    </lineage>
</organism>
<gene>
    <name type="primary">lvsE</name>
    <name type="ORF">DDB_G0282925</name>
</gene>